<comment type="subunit">
    <text evidence="1">Part of a tripartite efflux system composed of MdtA, MdtB and MdtC. MdtC forms a heteromultimer with MdtB.</text>
</comment>
<comment type="subcellular location">
    <subcellularLocation>
        <location evidence="1">Cell inner membrane</location>
        <topology evidence="1">Multi-pass membrane protein</topology>
    </subcellularLocation>
</comment>
<comment type="similarity">
    <text evidence="1">Belongs to the resistance-nodulation-cell division (RND) (TC 2.A.6) family. MdtC subfamily.</text>
</comment>
<organism>
    <name type="scientific">Shigella sonnei (strain Ss046)</name>
    <dbReference type="NCBI Taxonomy" id="300269"/>
    <lineage>
        <taxon>Bacteria</taxon>
        <taxon>Pseudomonadati</taxon>
        <taxon>Pseudomonadota</taxon>
        <taxon>Gammaproteobacteria</taxon>
        <taxon>Enterobacterales</taxon>
        <taxon>Enterobacteriaceae</taxon>
        <taxon>Shigella</taxon>
    </lineage>
</organism>
<gene>
    <name evidence="1" type="primary">mdtC</name>
    <name type="ordered locus">SSON_2128</name>
</gene>
<dbReference type="EMBL" id="CP000038">
    <property type="protein sequence ID" value="AAZ88784.1"/>
    <property type="molecule type" value="Genomic_DNA"/>
</dbReference>
<dbReference type="RefSeq" id="WP_000667546.1">
    <property type="nucleotide sequence ID" value="NC_007384.1"/>
</dbReference>
<dbReference type="SMR" id="Q3Z0C8"/>
<dbReference type="KEGG" id="ssn:SSON_2128"/>
<dbReference type="HOGENOM" id="CLU_002755_1_2_6"/>
<dbReference type="Proteomes" id="UP000002529">
    <property type="component" value="Chromosome"/>
</dbReference>
<dbReference type="GO" id="GO:0005886">
    <property type="term" value="C:plasma membrane"/>
    <property type="evidence" value="ECO:0007669"/>
    <property type="project" value="UniProtKB-SubCell"/>
</dbReference>
<dbReference type="GO" id="GO:0042910">
    <property type="term" value="F:xenobiotic transmembrane transporter activity"/>
    <property type="evidence" value="ECO:0007669"/>
    <property type="project" value="TreeGrafter"/>
</dbReference>
<dbReference type="FunFam" id="1.20.1640.10:FF:000001">
    <property type="entry name" value="Efflux pump membrane transporter"/>
    <property type="match status" value="1"/>
</dbReference>
<dbReference type="FunFam" id="3.30.70.1430:FF:000001">
    <property type="entry name" value="Efflux pump membrane transporter"/>
    <property type="match status" value="1"/>
</dbReference>
<dbReference type="FunFam" id="3.30.2090.10:FF:000004">
    <property type="entry name" value="Multidrug resistance protein MdtC"/>
    <property type="match status" value="1"/>
</dbReference>
<dbReference type="FunFam" id="3.30.2090.10:FF:000005">
    <property type="entry name" value="Multidrug resistance protein MdtC"/>
    <property type="match status" value="1"/>
</dbReference>
<dbReference type="FunFam" id="3.30.70.1430:FF:000004">
    <property type="entry name" value="Multidrug resistance protein MdtC"/>
    <property type="match status" value="1"/>
</dbReference>
<dbReference type="Gene3D" id="3.30.70.1430">
    <property type="entry name" value="Multidrug efflux transporter AcrB pore domain"/>
    <property type="match status" value="2"/>
</dbReference>
<dbReference type="Gene3D" id="3.30.70.1440">
    <property type="entry name" value="Multidrug efflux transporter AcrB pore domain"/>
    <property type="match status" value="1"/>
</dbReference>
<dbReference type="Gene3D" id="3.30.70.1320">
    <property type="entry name" value="Multidrug efflux transporter AcrB pore domain like"/>
    <property type="match status" value="1"/>
</dbReference>
<dbReference type="Gene3D" id="3.30.2090.10">
    <property type="entry name" value="Multidrug efflux transporter AcrB TolC docking domain, DN and DC subdomains"/>
    <property type="match status" value="2"/>
</dbReference>
<dbReference type="Gene3D" id="1.20.1640.10">
    <property type="entry name" value="Multidrug efflux transporter AcrB transmembrane domain"/>
    <property type="match status" value="2"/>
</dbReference>
<dbReference type="HAMAP" id="MF_01424">
    <property type="entry name" value="MdtC"/>
    <property type="match status" value="1"/>
</dbReference>
<dbReference type="InterPro" id="IPR027463">
    <property type="entry name" value="AcrB_DN_DC_subdom"/>
</dbReference>
<dbReference type="InterPro" id="IPR001036">
    <property type="entry name" value="Acrflvin-R"/>
</dbReference>
<dbReference type="InterPro" id="IPR023931">
    <property type="entry name" value="Multidrug-R_MdtC"/>
</dbReference>
<dbReference type="NCBIfam" id="NF007905">
    <property type="entry name" value="PRK10614.1"/>
    <property type="match status" value="1"/>
</dbReference>
<dbReference type="NCBIfam" id="NF033617">
    <property type="entry name" value="RND_permease_2"/>
    <property type="match status" value="1"/>
</dbReference>
<dbReference type="PANTHER" id="PTHR32063">
    <property type="match status" value="1"/>
</dbReference>
<dbReference type="PANTHER" id="PTHR32063:SF34">
    <property type="entry name" value="MULTIDRUG RESISTANCE PROTEIN MDTC"/>
    <property type="match status" value="1"/>
</dbReference>
<dbReference type="Pfam" id="PF00873">
    <property type="entry name" value="ACR_tran"/>
    <property type="match status" value="1"/>
</dbReference>
<dbReference type="PRINTS" id="PR00702">
    <property type="entry name" value="ACRIFLAVINRP"/>
</dbReference>
<dbReference type="SUPFAM" id="SSF82693">
    <property type="entry name" value="Multidrug efflux transporter AcrB pore domain, PN1, PN2, PC1 and PC2 subdomains"/>
    <property type="match status" value="4"/>
</dbReference>
<dbReference type="SUPFAM" id="SSF82714">
    <property type="entry name" value="Multidrug efflux transporter AcrB TolC docking domain, DN and DC subdomains"/>
    <property type="match status" value="2"/>
</dbReference>
<dbReference type="SUPFAM" id="SSF82866">
    <property type="entry name" value="Multidrug efflux transporter AcrB transmembrane domain"/>
    <property type="match status" value="2"/>
</dbReference>
<sequence>MKFFALFIYRPVATILLSVAITLCGILGFRMLPVAPLPQVDFPVIMVSASLPGASPETMASSVATPLERSLGRIAGVSEMTSSSSLGSTRIILQFDFDRDINGAARDVQAAINAAQSLLPSGMPSRPTYRKANPSDAPIMILTLTSDTYSQGELYDFASTQLAPTISQIDGVGDVDVGGSSLPAVRVGLNPQALFNQGVSLDDVRTAISNANVRKPQGALEDGTHRWQIQTNDELKTAAEYQPLIIHYNNGGAVRLGDVATVTDSVQDVRNAGMTNAKPAILLMIRKLPEANIIQTVDSIRAKLPELQETIPAAIDLQIAQDRSPTIRASLEEVEQTLIISVALVILVVFLFLRSGRATIIPAVSVPVSLIGTFAAMYLCGFSLNNLSLMALTIATGFVVDDAIVVLENIARHLEAGMKPLQAALQGTREVGFTVLSMSLSLVAVFLPLLLMGGLPGRLLREFAVTLSVAIGISLLVSLTLTPMMCGWMLKASKPREQKRLRGFGRMLVALQQGYGKSLKWVLNHTRLVGVVLLGTIALNIWLYISIPKTFFPEQDTGVLMGGIQADQSISFQAMRGKLQDFMKIIRDDPAVDNVTGFTGGSRVNSGMMFITLKPRDERSETAQQIIDRLRVKLAKEPGANLFLMAVQDIRVGGRQSNASYQYTLLSDDLAALREWEPKIRKKLATLPELADVNSDQQDNGAEMNLVYDRDTMARLGIDVQAANSLLNNAFGQRQISTIYQPMNQYKVVMEVDPRYTQDISALEKMFVINNEGKAIPLSYFAKWQPANAPLSVNHQGLSAASTISFNLPTGKSLSDASAAIDRAMTQLGVPSTVRGSFAGTAQVFQETMNSQVILIIAAIATVYIVLGILYESYVHPLTILSTLPSAGVGALLALELFNAPFSLIALIGIMLLIGIVKKNAIMMVDFALEAQRHGNLTPQEAIFQACLLRFRPIMMTTLAALFGALPLVLSGGDGSELRHPLGITIVGGLVMSQLLTLYTTPVVYLFFDRLRLRFSRKPKQTVTE</sequence>
<protein>
    <recommendedName>
        <fullName evidence="1">Multidrug resistance protein MdtC</fullName>
    </recommendedName>
    <alternativeName>
        <fullName evidence="1">Multidrug transporter MdtC</fullName>
    </alternativeName>
</protein>
<proteinExistence type="inferred from homology"/>
<name>MDTC_SHISS</name>
<keyword id="KW-0997">Cell inner membrane</keyword>
<keyword id="KW-1003">Cell membrane</keyword>
<keyword id="KW-0472">Membrane</keyword>
<keyword id="KW-1185">Reference proteome</keyword>
<keyword id="KW-0812">Transmembrane</keyword>
<keyword id="KW-1133">Transmembrane helix</keyword>
<keyword id="KW-0813">Transport</keyword>
<accession>Q3Z0C8</accession>
<feature type="chain" id="PRO_1000024319" description="Multidrug resistance protein MdtC">
    <location>
        <begin position="1"/>
        <end position="1025"/>
    </location>
</feature>
<feature type="transmembrane region" description="Helical" evidence="1">
    <location>
        <begin position="3"/>
        <end position="23"/>
    </location>
</feature>
<feature type="transmembrane region" description="Helical" evidence="1">
    <location>
        <begin position="333"/>
        <end position="353"/>
    </location>
</feature>
<feature type="transmembrane region" description="Helical" evidence="1">
    <location>
        <begin position="360"/>
        <end position="380"/>
    </location>
</feature>
<feature type="transmembrane region" description="Helical" evidence="1">
    <location>
        <begin position="387"/>
        <end position="407"/>
    </location>
</feature>
<feature type="transmembrane region" description="Helical" evidence="1">
    <location>
        <begin position="431"/>
        <end position="451"/>
    </location>
</feature>
<feature type="transmembrane region" description="Helical" evidence="1">
    <location>
        <begin position="463"/>
        <end position="483"/>
    </location>
</feature>
<feature type="transmembrane region" description="Helical" evidence="1">
    <location>
        <begin position="528"/>
        <end position="548"/>
    </location>
</feature>
<feature type="transmembrane region" description="Helical" evidence="1">
    <location>
        <begin position="853"/>
        <end position="873"/>
    </location>
</feature>
<feature type="transmembrane region" description="Helical" evidence="1">
    <location>
        <begin position="875"/>
        <end position="895"/>
    </location>
</feature>
<feature type="transmembrane region" description="Helical" evidence="1">
    <location>
        <begin position="897"/>
        <end position="917"/>
    </location>
</feature>
<feature type="transmembrane region" description="Helical" evidence="1">
    <location>
        <begin position="953"/>
        <end position="973"/>
    </location>
</feature>
<feature type="transmembrane region" description="Helical" evidence="1">
    <location>
        <begin position="984"/>
        <end position="1004"/>
    </location>
</feature>
<reference key="1">
    <citation type="journal article" date="2005" name="Nucleic Acids Res.">
        <title>Genome dynamics and diversity of Shigella species, the etiologic agents of bacillary dysentery.</title>
        <authorList>
            <person name="Yang F."/>
            <person name="Yang J."/>
            <person name="Zhang X."/>
            <person name="Chen L."/>
            <person name="Jiang Y."/>
            <person name="Yan Y."/>
            <person name="Tang X."/>
            <person name="Wang J."/>
            <person name="Xiong Z."/>
            <person name="Dong J."/>
            <person name="Xue Y."/>
            <person name="Zhu Y."/>
            <person name="Xu X."/>
            <person name="Sun L."/>
            <person name="Chen S."/>
            <person name="Nie H."/>
            <person name="Peng J."/>
            <person name="Xu J."/>
            <person name="Wang Y."/>
            <person name="Yuan Z."/>
            <person name="Wen Y."/>
            <person name="Yao Z."/>
            <person name="Shen Y."/>
            <person name="Qiang B."/>
            <person name="Hou Y."/>
            <person name="Yu J."/>
            <person name="Jin Q."/>
        </authorList>
    </citation>
    <scope>NUCLEOTIDE SEQUENCE [LARGE SCALE GENOMIC DNA]</scope>
    <source>
        <strain>Ss046</strain>
    </source>
</reference>
<evidence type="ECO:0000255" key="1">
    <source>
        <dbReference type="HAMAP-Rule" id="MF_01424"/>
    </source>
</evidence>